<accession>Q02I17</accession>
<protein>
    <recommendedName>
        <fullName evidence="1">tRNA uridine(34) hydroxylase</fullName>
        <ecNumber evidence="1">1.14.-.-</ecNumber>
    </recommendedName>
    <alternativeName>
        <fullName evidence="1">tRNA hydroxylation protein O</fullName>
    </alternativeName>
</protein>
<feature type="chain" id="PRO_1000013758" description="tRNA uridine(34) hydroxylase">
    <location>
        <begin position="1"/>
        <end position="312"/>
    </location>
</feature>
<feature type="domain" description="Rhodanese" evidence="1">
    <location>
        <begin position="123"/>
        <end position="217"/>
    </location>
</feature>
<feature type="region of interest" description="Disordered" evidence="2">
    <location>
        <begin position="282"/>
        <end position="312"/>
    </location>
</feature>
<feature type="compositionally biased region" description="Basic and acidic residues" evidence="2">
    <location>
        <begin position="282"/>
        <end position="293"/>
    </location>
</feature>
<feature type="active site" description="Cysteine persulfide intermediate" evidence="1">
    <location>
        <position position="177"/>
    </location>
</feature>
<evidence type="ECO:0000255" key="1">
    <source>
        <dbReference type="HAMAP-Rule" id="MF_00469"/>
    </source>
</evidence>
<evidence type="ECO:0000256" key="2">
    <source>
        <dbReference type="SAM" id="MobiDB-lite"/>
    </source>
</evidence>
<sequence length="312" mass="35464">MTSIVVAALYKFVTLDDYVALREPLLQTLLDNGVKGTLLLAEEGINGTVSGSREGIDALFAWLRSDPRLADIEHKESYCDEQPFYRTKVKLKKEIVTLGVLGVDPNKQVGQYVEAKDWNALISDPEVLLIDTRNDYEVAIGTFEGAVDPKTRSFREFPEYIKAHYDPARHKKVAMFCTGGIRCEKASSYMLGAGFEEVFHLRGGILKYLEEVPQEQSLWRGDCFVFDNRVTVRHDLSEGEYDQCHACRNPVSLEDRQSEHYVPGISCPHCWDSLSEKTRAGARERQKQIELARQRNQPHPLGRDPRQSTLEN</sequence>
<proteinExistence type="inferred from homology"/>
<reference key="1">
    <citation type="journal article" date="2006" name="Genome Biol.">
        <title>Genomic analysis reveals that Pseudomonas aeruginosa virulence is combinatorial.</title>
        <authorList>
            <person name="Lee D.G."/>
            <person name="Urbach J.M."/>
            <person name="Wu G."/>
            <person name="Liberati N.T."/>
            <person name="Feinbaum R.L."/>
            <person name="Miyata S."/>
            <person name="Diggins L.T."/>
            <person name="He J."/>
            <person name="Saucier M."/>
            <person name="Deziel E."/>
            <person name="Friedman L."/>
            <person name="Li L."/>
            <person name="Grills G."/>
            <person name="Montgomery K."/>
            <person name="Kucherlapati R."/>
            <person name="Rahme L.G."/>
            <person name="Ausubel F.M."/>
        </authorList>
    </citation>
    <scope>NUCLEOTIDE SEQUENCE [LARGE SCALE GENOMIC DNA]</scope>
    <source>
        <strain>UCBPP-PA14</strain>
    </source>
</reference>
<comment type="function">
    <text evidence="1">Catalyzes oxygen-dependent 5-hydroxyuridine (ho5U) modification at position 34 in tRNAs.</text>
</comment>
<comment type="catalytic activity">
    <reaction evidence="1">
        <text>uridine(34) in tRNA + AH2 + O2 = 5-hydroxyuridine(34) in tRNA + A + H2O</text>
        <dbReference type="Rhea" id="RHEA:64224"/>
        <dbReference type="Rhea" id="RHEA-COMP:11727"/>
        <dbReference type="Rhea" id="RHEA-COMP:13381"/>
        <dbReference type="ChEBI" id="CHEBI:13193"/>
        <dbReference type="ChEBI" id="CHEBI:15377"/>
        <dbReference type="ChEBI" id="CHEBI:15379"/>
        <dbReference type="ChEBI" id="CHEBI:17499"/>
        <dbReference type="ChEBI" id="CHEBI:65315"/>
        <dbReference type="ChEBI" id="CHEBI:136877"/>
    </reaction>
</comment>
<comment type="similarity">
    <text evidence="1">Belongs to the TrhO family.</text>
</comment>
<keyword id="KW-0560">Oxidoreductase</keyword>
<keyword id="KW-0819">tRNA processing</keyword>
<gene>
    <name evidence="1" type="primary">trhO</name>
    <name type="ordered locus">PA14_53180</name>
</gene>
<name>TRHO_PSEAB</name>
<organism>
    <name type="scientific">Pseudomonas aeruginosa (strain UCBPP-PA14)</name>
    <dbReference type="NCBI Taxonomy" id="208963"/>
    <lineage>
        <taxon>Bacteria</taxon>
        <taxon>Pseudomonadati</taxon>
        <taxon>Pseudomonadota</taxon>
        <taxon>Gammaproteobacteria</taxon>
        <taxon>Pseudomonadales</taxon>
        <taxon>Pseudomonadaceae</taxon>
        <taxon>Pseudomonas</taxon>
    </lineage>
</organism>
<dbReference type="EC" id="1.14.-.-" evidence="1"/>
<dbReference type="EMBL" id="CP000438">
    <property type="protein sequence ID" value="ABJ10017.1"/>
    <property type="molecule type" value="Genomic_DNA"/>
</dbReference>
<dbReference type="RefSeq" id="WP_003140843.1">
    <property type="nucleotide sequence ID" value="NZ_CP034244.1"/>
</dbReference>
<dbReference type="SMR" id="Q02I17"/>
<dbReference type="KEGG" id="pau:PA14_53180"/>
<dbReference type="PseudoCAP" id="PA14_53180"/>
<dbReference type="HOGENOM" id="CLU_038878_0_0_6"/>
<dbReference type="BioCyc" id="PAER208963:G1G74-4475-MONOMER"/>
<dbReference type="Proteomes" id="UP000000653">
    <property type="component" value="Chromosome"/>
</dbReference>
<dbReference type="GO" id="GO:0016705">
    <property type="term" value="F:oxidoreductase activity, acting on paired donors, with incorporation or reduction of molecular oxygen"/>
    <property type="evidence" value="ECO:0007669"/>
    <property type="project" value="UniProtKB-UniRule"/>
</dbReference>
<dbReference type="GO" id="GO:0006400">
    <property type="term" value="P:tRNA modification"/>
    <property type="evidence" value="ECO:0007669"/>
    <property type="project" value="UniProtKB-UniRule"/>
</dbReference>
<dbReference type="CDD" id="cd01518">
    <property type="entry name" value="RHOD_YceA"/>
    <property type="match status" value="1"/>
</dbReference>
<dbReference type="Gene3D" id="3.30.70.100">
    <property type="match status" value="1"/>
</dbReference>
<dbReference type="Gene3D" id="3.40.250.10">
    <property type="entry name" value="Rhodanese-like domain"/>
    <property type="match status" value="1"/>
</dbReference>
<dbReference type="HAMAP" id="MF_00469">
    <property type="entry name" value="TrhO"/>
    <property type="match status" value="1"/>
</dbReference>
<dbReference type="InterPro" id="IPR001763">
    <property type="entry name" value="Rhodanese-like_dom"/>
</dbReference>
<dbReference type="InterPro" id="IPR036873">
    <property type="entry name" value="Rhodanese-like_dom_sf"/>
</dbReference>
<dbReference type="InterPro" id="IPR020936">
    <property type="entry name" value="TrhO"/>
</dbReference>
<dbReference type="InterPro" id="IPR040503">
    <property type="entry name" value="TRHO_N"/>
</dbReference>
<dbReference type="NCBIfam" id="NF001136">
    <property type="entry name" value="PRK00142.1-4"/>
    <property type="match status" value="1"/>
</dbReference>
<dbReference type="PANTHER" id="PTHR43268:SF3">
    <property type="entry name" value="RHODANESE-LIKE DOMAIN-CONTAINING PROTEIN 7-RELATED"/>
    <property type="match status" value="1"/>
</dbReference>
<dbReference type="PANTHER" id="PTHR43268">
    <property type="entry name" value="THIOSULFATE SULFURTRANSFERASE/RHODANESE-LIKE DOMAIN-CONTAINING PROTEIN 2"/>
    <property type="match status" value="1"/>
</dbReference>
<dbReference type="Pfam" id="PF00581">
    <property type="entry name" value="Rhodanese"/>
    <property type="match status" value="1"/>
</dbReference>
<dbReference type="Pfam" id="PF17773">
    <property type="entry name" value="UPF0176_N"/>
    <property type="match status" value="1"/>
</dbReference>
<dbReference type="SMART" id="SM00450">
    <property type="entry name" value="RHOD"/>
    <property type="match status" value="1"/>
</dbReference>
<dbReference type="SUPFAM" id="SSF52821">
    <property type="entry name" value="Rhodanese/Cell cycle control phosphatase"/>
    <property type="match status" value="1"/>
</dbReference>
<dbReference type="PROSITE" id="PS50206">
    <property type="entry name" value="RHODANESE_3"/>
    <property type="match status" value="1"/>
</dbReference>